<proteinExistence type="inferred from homology"/>
<keyword id="KW-0378">Hydrolase</keyword>
<keyword id="KW-0460">Magnesium</keyword>
<keyword id="KW-0479">Metal-binding</keyword>
<keyword id="KW-0546">Nucleotide metabolism</keyword>
<keyword id="KW-0547">Nucleotide-binding</keyword>
<protein>
    <recommendedName>
        <fullName evidence="1">dITP/XTP pyrophosphatase</fullName>
        <ecNumber evidence="1">3.6.1.66</ecNumber>
    </recommendedName>
    <alternativeName>
        <fullName evidence="1">Non-canonical purine NTP pyrophosphatase</fullName>
    </alternativeName>
    <alternativeName>
        <fullName evidence="1">Non-standard purine NTP pyrophosphatase</fullName>
    </alternativeName>
    <alternativeName>
        <fullName evidence="1">Nucleoside-triphosphate diphosphatase</fullName>
    </alternativeName>
    <alternativeName>
        <fullName evidence="1">Nucleoside-triphosphate pyrophosphatase</fullName>
        <shortName evidence="1">NTPase</shortName>
    </alternativeName>
</protein>
<reference key="1">
    <citation type="journal article" date="2014" name="Genome Announc.">
        <title>Complete Genome Sequence of the Extreme Thermophile Dictyoglomus thermophilum H-6-12.</title>
        <authorList>
            <person name="Coil D.A."/>
            <person name="Badger J.H."/>
            <person name="Forberger H.C."/>
            <person name="Riggs F."/>
            <person name="Madupu R."/>
            <person name="Fedorova N."/>
            <person name="Ward N."/>
            <person name="Robb F.T."/>
            <person name="Eisen J.A."/>
        </authorList>
    </citation>
    <scope>NUCLEOTIDE SEQUENCE [LARGE SCALE GENOMIC DNA]</scope>
    <source>
        <strain>ATCC 35947 / DSM 3960 / H-6-12</strain>
    </source>
</reference>
<feature type="chain" id="PRO_1000145488" description="dITP/XTP pyrophosphatase">
    <location>
        <begin position="1"/>
        <end position="205"/>
    </location>
</feature>
<feature type="active site" description="Proton acceptor" evidence="1">
    <location>
        <position position="73"/>
    </location>
</feature>
<feature type="binding site" evidence="1">
    <location>
        <begin position="10"/>
        <end position="15"/>
    </location>
    <ligand>
        <name>substrate</name>
    </ligand>
</feature>
<feature type="binding site" evidence="1">
    <location>
        <position position="44"/>
    </location>
    <ligand>
        <name>Mg(2+)</name>
        <dbReference type="ChEBI" id="CHEBI:18420"/>
    </ligand>
</feature>
<feature type="binding site" evidence="1">
    <location>
        <position position="73"/>
    </location>
    <ligand>
        <name>Mg(2+)</name>
        <dbReference type="ChEBI" id="CHEBI:18420"/>
    </ligand>
</feature>
<feature type="binding site" evidence="1">
    <location>
        <position position="74"/>
    </location>
    <ligand>
        <name>substrate</name>
    </ligand>
</feature>
<feature type="binding site" evidence="1">
    <location>
        <begin position="156"/>
        <end position="159"/>
    </location>
    <ligand>
        <name>substrate</name>
    </ligand>
</feature>
<feature type="binding site" evidence="1">
    <location>
        <position position="179"/>
    </location>
    <ligand>
        <name>substrate</name>
    </ligand>
</feature>
<feature type="binding site" evidence="1">
    <location>
        <begin position="184"/>
        <end position="185"/>
    </location>
    <ligand>
        <name>substrate</name>
    </ligand>
</feature>
<comment type="function">
    <text evidence="1">Pyrophosphatase that catalyzes the hydrolysis of nucleoside triphosphates to their monophosphate derivatives, with a high preference for the non-canonical purine nucleotides XTP (xanthosine triphosphate), dITP (deoxyinosine triphosphate) and ITP. Seems to function as a house-cleaning enzyme that removes non-canonical purine nucleotides from the nucleotide pool, thus preventing their incorporation into DNA/RNA and avoiding chromosomal lesions.</text>
</comment>
<comment type="catalytic activity">
    <reaction evidence="1">
        <text>XTP + H2O = XMP + diphosphate + H(+)</text>
        <dbReference type="Rhea" id="RHEA:28610"/>
        <dbReference type="ChEBI" id="CHEBI:15377"/>
        <dbReference type="ChEBI" id="CHEBI:15378"/>
        <dbReference type="ChEBI" id="CHEBI:33019"/>
        <dbReference type="ChEBI" id="CHEBI:57464"/>
        <dbReference type="ChEBI" id="CHEBI:61314"/>
        <dbReference type="EC" id="3.6.1.66"/>
    </reaction>
</comment>
<comment type="catalytic activity">
    <reaction evidence="1">
        <text>dITP + H2O = dIMP + diphosphate + H(+)</text>
        <dbReference type="Rhea" id="RHEA:28342"/>
        <dbReference type="ChEBI" id="CHEBI:15377"/>
        <dbReference type="ChEBI" id="CHEBI:15378"/>
        <dbReference type="ChEBI" id="CHEBI:33019"/>
        <dbReference type="ChEBI" id="CHEBI:61194"/>
        <dbReference type="ChEBI" id="CHEBI:61382"/>
        <dbReference type="EC" id="3.6.1.66"/>
    </reaction>
</comment>
<comment type="catalytic activity">
    <reaction evidence="1">
        <text>ITP + H2O = IMP + diphosphate + H(+)</text>
        <dbReference type="Rhea" id="RHEA:29399"/>
        <dbReference type="ChEBI" id="CHEBI:15377"/>
        <dbReference type="ChEBI" id="CHEBI:15378"/>
        <dbReference type="ChEBI" id="CHEBI:33019"/>
        <dbReference type="ChEBI" id="CHEBI:58053"/>
        <dbReference type="ChEBI" id="CHEBI:61402"/>
        <dbReference type="EC" id="3.6.1.66"/>
    </reaction>
</comment>
<comment type="cofactor">
    <cofactor evidence="1">
        <name>Mg(2+)</name>
        <dbReference type="ChEBI" id="CHEBI:18420"/>
    </cofactor>
    <text evidence="1">Binds 1 Mg(2+) ion per subunit.</text>
</comment>
<comment type="subunit">
    <text evidence="1">Homodimer.</text>
</comment>
<comment type="similarity">
    <text evidence="1">Belongs to the HAM1 NTPase family.</text>
</comment>
<sequence>MDKRIIVLATKNEGKVREILEILSEYKDQIKTLKELEFDMDLPEETGKSYEENAFIKAKYVAEITGYPVIAEDSGLEIDALQGELGIYSARFGGNVGYKEKISLVLEKMKDTPWEDRKARFICKAVFYDMKEDVKIITGGKVEGYIAYEPKGEKGFGYDPIFYFPLLDKTFGEIDKSEKNKYSHRFLAFSKLKLFLDAYCKGGKI</sequence>
<organism>
    <name type="scientific">Dictyoglomus thermophilum (strain ATCC 35947 / DSM 3960 / H-6-12)</name>
    <dbReference type="NCBI Taxonomy" id="309799"/>
    <lineage>
        <taxon>Bacteria</taxon>
        <taxon>Pseudomonadati</taxon>
        <taxon>Dictyoglomota</taxon>
        <taxon>Dictyoglomia</taxon>
        <taxon>Dictyoglomales</taxon>
        <taxon>Dictyoglomaceae</taxon>
        <taxon>Dictyoglomus</taxon>
    </lineage>
</organism>
<evidence type="ECO:0000255" key="1">
    <source>
        <dbReference type="HAMAP-Rule" id="MF_01405"/>
    </source>
</evidence>
<dbReference type="EC" id="3.6.1.66" evidence="1"/>
<dbReference type="EMBL" id="CP001146">
    <property type="protein sequence ID" value="ACI19419.1"/>
    <property type="molecule type" value="Genomic_DNA"/>
</dbReference>
<dbReference type="RefSeq" id="WP_012548051.1">
    <property type="nucleotide sequence ID" value="NC_011297.1"/>
</dbReference>
<dbReference type="SMR" id="B5YEU3"/>
<dbReference type="STRING" id="309799.DICTH_1222"/>
<dbReference type="PaxDb" id="309799-DICTH_1222"/>
<dbReference type="KEGG" id="dth:DICTH_1222"/>
<dbReference type="eggNOG" id="COG0127">
    <property type="taxonomic scope" value="Bacteria"/>
</dbReference>
<dbReference type="HOGENOM" id="CLU_082080_0_2_0"/>
<dbReference type="OrthoDB" id="9807456at2"/>
<dbReference type="Proteomes" id="UP000001733">
    <property type="component" value="Chromosome"/>
</dbReference>
<dbReference type="GO" id="GO:0005829">
    <property type="term" value="C:cytosol"/>
    <property type="evidence" value="ECO:0007669"/>
    <property type="project" value="TreeGrafter"/>
</dbReference>
<dbReference type="GO" id="GO:0035870">
    <property type="term" value="F:dITP diphosphatase activity"/>
    <property type="evidence" value="ECO:0007669"/>
    <property type="project" value="RHEA"/>
</dbReference>
<dbReference type="GO" id="GO:0036220">
    <property type="term" value="F:ITP diphosphatase activity"/>
    <property type="evidence" value="ECO:0007669"/>
    <property type="project" value="UniProtKB-EC"/>
</dbReference>
<dbReference type="GO" id="GO:0046872">
    <property type="term" value="F:metal ion binding"/>
    <property type="evidence" value="ECO:0007669"/>
    <property type="project" value="UniProtKB-KW"/>
</dbReference>
<dbReference type="GO" id="GO:0000166">
    <property type="term" value="F:nucleotide binding"/>
    <property type="evidence" value="ECO:0007669"/>
    <property type="project" value="UniProtKB-KW"/>
</dbReference>
<dbReference type="GO" id="GO:0017111">
    <property type="term" value="F:ribonucleoside triphosphate phosphatase activity"/>
    <property type="evidence" value="ECO:0007669"/>
    <property type="project" value="InterPro"/>
</dbReference>
<dbReference type="GO" id="GO:0036222">
    <property type="term" value="F:XTP diphosphatase activity"/>
    <property type="evidence" value="ECO:0007669"/>
    <property type="project" value="RHEA"/>
</dbReference>
<dbReference type="GO" id="GO:0009117">
    <property type="term" value="P:nucleotide metabolic process"/>
    <property type="evidence" value="ECO:0007669"/>
    <property type="project" value="UniProtKB-KW"/>
</dbReference>
<dbReference type="GO" id="GO:0009146">
    <property type="term" value="P:purine nucleoside triphosphate catabolic process"/>
    <property type="evidence" value="ECO:0007669"/>
    <property type="project" value="UniProtKB-UniRule"/>
</dbReference>
<dbReference type="CDD" id="cd00515">
    <property type="entry name" value="HAM1"/>
    <property type="match status" value="1"/>
</dbReference>
<dbReference type="FunFam" id="3.90.950.10:FF:000001">
    <property type="entry name" value="dITP/XTP pyrophosphatase"/>
    <property type="match status" value="1"/>
</dbReference>
<dbReference type="Gene3D" id="3.90.950.10">
    <property type="match status" value="1"/>
</dbReference>
<dbReference type="HAMAP" id="MF_01405">
    <property type="entry name" value="Non_canon_purine_NTPase"/>
    <property type="match status" value="1"/>
</dbReference>
<dbReference type="InterPro" id="IPR020922">
    <property type="entry name" value="dITP/XTP_pyrophosphatase"/>
</dbReference>
<dbReference type="InterPro" id="IPR029001">
    <property type="entry name" value="ITPase-like_fam"/>
</dbReference>
<dbReference type="InterPro" id="IPR002637">
    <property type="entry name" value="RdgB/HAM1"/>
</dbReference>
<dbReference type="NCBIfam" id="TIGR00042">
    <property type="entry name" value="RdgB/HAM1 family non-canonical purine NTP pyrophosphatase"/>
    <property type="match status" value="1"/>
</dbReference>
<dbReference type="PANTHER" id="PTHR11067:SF9">
    <property type="entry name" value="INOSINE TRIPHOSPHATE PYROPHOSPHATASE"/>
    <property type="match status" value="1"/>
</dbReference>
<dbReference type="PANTHER" id="PTHR11067">
    <property type="entry name" value="INOSINE TRIPHOSPHATE PYROPHOSPHATASE/HAM1 PROTEIN"/>
    <property type="match status" value="1"/>
</dbReference>
<dbReference type="Pfam" id="PF01725">
    <property type="entry name" value="Ham1p_like"/>
    <property type="match status" value="1"/>
</dbReference>
<dbReference type="SUPFAM" id="SSF52972">
    <property type="entry name" value="ITPase-like"/>
    <property type="match status" value="1"/>
</dbReference>
<accession>B5YEU3</accession>
<name>IXTPA_DICT6</name>
<gene>
    <name type="ordered locus">DICTH_1222</name>
</gene>